<sequence length="129" mass="15355">MLNFKFLKCVYLCFMVFVRLILIIKFRGKKFMNRKFVISLLFIILTFLLILGCDLSINNDRNKIDGASHFKKKYMDNLNYQCLSKKESEAKNSQIKLDENNNKNHFYSSRVSNVSNYYDRTHISCKKND</sequence>
<evidence type="ECO:0000255" key="1"/>
<evidence type="ECO:0000305" key="2"/>
<comment type="subcellular location">
    <subcellularLocation>
        <location evidence="2">Cell membrane</location>
        <topology evidence="2">Multi-pass membrane protein</topology>
    </subcellularLocation>
</comment>
<comment type="similarity">
    <text evidence="2">To B.burgdorferi BBF20.</text>
</comment>
<comment type="sequence caution" evidence="2">
    <conflict type="erroneous initiation">
        <sequence resource="EMBL-CDS" id="AAB38559"/>
    </conflict>
    <text>Truncated N-terminus.</text>
</comment>
<accession>P70841</accession>
<dbReference type="EMBL" id="U43414">
    <property type="protein sequence ID" value="AAB38559.1"/>
    <property type="status" value="ALT_INIT"/>
    <property type="molecule type" value="Genomic_DNA"/>
</dbReference>
<dbReference type="EMBL" id="AE000793">
    <property type="protein sequence ID" value="AAC66348.2"/>
    <property type="molecule type" value="Genomic_DNA"/>
</dbReference>
<dbReference type="PIR" id="C70223">
    <property type="entry name" value="C70223"/>
</dbReference>
<dbReference type="RefSeq" id="NP_045399.2">
    <property type="nucleotide sequence ID" value="NC_001849.2"/>
</dbReference>
<dbReference type="RefSeq" id="WP_011117334.1">
    <property type="nucleotide sequence ID" value="NC_001849.2"/>
</dbReference>
<dbReference type="SMR" id="P70841"/>
<dbReference type="EnsemblBacteria" id="AAC66348">
    <property type="protein sequence ID" value="AAC66348"/>
    <property type="gene ID" value="BB_D15"/>
</dbReference>
<dbReference type="KEGG" id="bbu:BB_D15"/>
<dbReference type="PATRIC" id="fig|224326.49.peg.1259"/>
<dbReference type="HOGENOM" id="CLU_159799_0_0_12"/>
<dbReference type="OrthoDB" id="352915at2"/>
<dbReference type="Proteomes" id="UP000001807">
    <property type="component" value="Plasmid lp17"/>
</dbReference>
<dbReference type="GO" id="GO:0005886">
    <property type="term" value="C:plasma membrane"/>
    <property type="evidence" value="ECO:0007669"/>
    <property type="project" value="UniProtKB-SubCell"/>
</dbReference>
<dbReference type="InterPro" id="IPR035340">
    <property type="entry name" value="DUF5425"/>
</dbReference>
<dbReference type="Pfam" id="PF17472">
    <property type="entry name" value="DUF5425"/>
    <property type="match status" value="1"/>
</dbReference>
<reference key="1">
    <citation type="journal article" date="1996" name="J. Bacteriol.">
        <title>The nucleotide sequence of a linear plasmid of Borrelia burgdorferi reveals similarities to those of circular plasmids of other prokaryotes.</title>
        <authorList>
            <person name="Barbour A.G."/>
            <person name="Carter C.J."/>
            <person name="Bundoc V."/>
            <person name="Hinnebusch J."/>
        </authorList>
    </citation>
    <scope>NUCLEOTIDE SEQUENCE [GENOMIC DNA]</scope>
    <source>
        <strain>ATCC 35210 / DSM 4680 / CIP 102532 / B31</strain>
    </source>
</reference>
<reference key="2">
    <citation type="journal article" date="1997" name="Nature">
        <title>Genomic sequence of a Lyme disease spirochaete, Borrelia burgdorferi.</title>
        <authorList>
            <person name="Fraser C.M."/>
            <person name="Casjens S."/>
            <person name="Huang W.M."/>
            <person name="Sutton G.G."/>
            <person name="Clayton R.A."/>
            <person name="Lathigra R."/>
            <person name="White O."/>
            <person name="Ketchum K.A."/>
            <person name="Dodson R.J."/>
            <person name="Hickey E.K."/>
            <person name="Gwinn M.L."/>
            <person name="Dougherty B.A."/>
            <person name="Tomb J.-F."/>
            <person name="Fleischmann R.D."/>
            <person name="Richardson D.L."/>
            <person name="Peterson J.D."/>
            <person name="Kerlavage A.R."/>
            <person name="Quackenbush J."/>
            <person name="Salzberg S.L."/>
            <person name="Hanson M."/>
            <person name="van Vugt R."/>
            <person name="Palmer N."/>
            <person name="Adams M.D."/>
            <person name="Gocayne J.D."/>
            <person name="Weidman J.F."/>
            <person name="Utterback T.R."/>
            <person name="Watthey L."/>
            <person name="McDonald L.A."/>
            <person name="Artiach P."/>
            <person name="Bowman C."/>
            <person name="Garland S.A."/>
            <person name="Fujii C."/>
            <person name="Cotton M.D."/>
            <person name="Horst K."/>
            <person name="Roberts K.M."/>
            <person name="Hatch B."/>
            <person name="Smith H.O."/>
            <person name="Venter J.C."/>
        </authorList>
    </citation>
    <scope>NUCLEOTIDE SEQUENCE [LARGE SCALE GENOMIC DNA]</scope>
    <source>
        <strain>ATCC 35210 / DSM 4680 / CIP 102532 / B31</strain>
    </source>
</reference>
<protein>
    <recommendedName>
        <fullName>Uncharacterized membrane protein BB_D15</fullName>
    </recommendedName>
</protein>
<name>Y2815_BORBU</name>
<gene>
    <name type="ordered locus">BB_D15</name>
    <name type="ORF">CdsK</name>
</gene>
<feature type="chain" id="PRO_0000013752" description="Uncharacterized membrane protein BB_D15">
    <location>
        <begin position="1"/>
        <end position="129"/>
    </location>
</feature>
<feature type="transmembrane region" description="Helical" evidence="1">
    <location>
        <begin position="4"/>
        <end position="24"/>
    </location>
</feature>
<feature type="transmembrane region" description="Helical" evidence="1">
    <location>
        <begin position="37"/>
        <end position="57"/>
    </location>
</feature>
<keyword id="KW-1003">Cell membrane</keyword>
<keyword id="KW-0472">Membrane</keyword>
<keyword id="KW-0614">Plasmid</keyword>
<keyword id="KW-1185">Reference proteome</keyword>
<keyword id="KW-0812">Transmembrane</keyword>
<keyword id="KW-1133">Transmembrane helix</keyword>
<proteinExistence type="predicted"/>
<organism>
    <name type="scientific">Borreliella burgdorferi (strain ATCC 35210 / DSM 4680 / CIP 102532 / B31)</name>
    <name type="common">Borrelia burgdorferi</name>
    <dbReference type="NCBI Taxonomy" id="224326"/>
    <lineage>
        <taxon>Bacteria</taxon>
        <taxon>Pseudomonadati</taxon>
        <taxon>Spirochaetota</taxon>
        <taxon>Spirochaetia</taxon>
        <taxon>Spirochaetales</taxon>
        <taxon>Borreliaceae</taxon>
        <taxon>Borreliella</taxon>
    </lineage>
</organism>
<geneLocation type="plasmid">
    <name>lp17 (linear 17 kb)</name>
    <name>lp16</name>
</geneLocation>